<gene>
    <name type="primary">CHS</name>
</gene>
<reference key="1">
    <citation type="journal article" date="1999" name="Plant J.">
        <title>Flavonoid hydroxylase from Catharanthus roseus: cDNA, heterologous expression, enzyme properties and cell-type specific expression in plants.</title>
        <authorList>
            <person name="Kaltenbach M."/>
            <person name="Schroeder G."/>
            <person name="Schmelzer E."/>
            <person name="Lutz V."/>
            <person name="Schroeder J."/>
        </authorList>
    </citation>
    <scope>NUCLEOTIDE SEQUENCE [MRNA]</scope>
</reference>
<feature type="chain" id="PRO_0000215965" description="Chalcone synthase">
    <location>
        <begin position="1"/>
        <end position="389"/>
    </location>
</feature>
<feature type="active site" evidence="1">
    <location>
        <position position="164"/>
    </location>
</feature>
<comment type="function">
    <text>The primary product of this enzyme is 4,2',4',6'-tetrahydroxychalcone (also termed naringenin-chalcone or chalcone) which can under specific conditions spontaneously isomerize into naringenin.</text>
</comment>
<comment type="catalytic activity">
    <reaction evidence="1">
        <text>(E)-4-coumaroyl-CoA + 3 malonyl-CoA + 3 H(+) = 2',4,4',6'-tetrahydroxychalcone + 3 CO2 + 4 CoA</text>
        <dbReference type="Rhea" id="RHEA:11128"/>
        <dbReference type="ChEBI" id="CHEBI:15378"/>
        <dbReference type="ChEBI" id="CHEBI:15413"/>
        <dbReference type="ChEBI" id="CHEBI:16526"/>
        <dbReference type="ChEBI" id="CHEBI:57287"/>
        <dbReference type="ChEBI" id="CHEBI:57384"/>
        <dbReference type="ChEBI" id="CHEBI:85008"/>
        <dbReference type="EC" id="2.3.1.74"/>
    </reaction>
</comment>
<comment type="pathway">
    <text>Secondary metabolite biosynthesis; flavonoid biosynthesis.</text>
</comment>
<comment type="similarity">
    <text evidence="2">Belongs to the thiolase-like superfamily. Chalcone/stilbene synthases family.</text>
</comment>
<protein>
    <recommendedName>
        <fullName>Chalcone synthase</fullName>
        <ecNumber>2.3.1.74</ecNumber>
    </recommendedName>
    <alternativeName>
        <fullName>Naringenin-chalcone synthase</fullName>
    </alternativeName>
</protein>
<accession>Q9ZRS4</accession>
<sequence>MVNVEEIRNAQRAQGPATVLAIGTSTPSNCVDQSTYPDYYFRITNSEHKTELKEKFKRMCEKSMIKKRYMHLTEEILQENPNICAYMAPSLDARQNIVVVEVPKLGKEAAQKAIKEWGQSKSKITHLVFCTTSGVDMPGADYQLTKLLGLRSSVKRLMMYQQGCFAGGTVLRLAKDLAENNKGARVLVVCSEITAVTFRGPSESHLDSLVGQALFGDGAAAIIVGSDPIPEIERPLFELVSAAQTLLPDSHGAIDGHLREVGLTFHLLKDVPGLISKNIGKALDEAFQPLGISDWNSIFWIAHPGGPAILDQVEEKLGLKPEKLRATRHVLSEYGNMSSACVLFILDEMRKASARDGLSTTGEGLEWGVLFGFGPGLTVETVVLHSVNV</sequence>
<proteinExistence type="evidence at transcript level"/>
<organism>
    <name type="scientific">Catharanthus roseus</name>
    <name type="common">Madagascar periwinkle</name>
    <name type="synonym">Vinca rosea</name>
    <dbReference type="NCBI Taxonomy" id="4058"/>
    <lineage>
        <taxon>Eukaryota</taxon>
        <taxon>Viridiplantae</taxon>
        <taxon>Streptophyta</taxon>
        <taxon>Embryophyta</taxon>
        <taxon>Tracheophyta</taxon>
        <taxon>Spermatophyta</taxon>
        <taxon>Magnoliopsida</taxon>
        <taxon>eudicotyledons</taxon>
        <taxon>Gunneridae</taxon>
        <taxon>Pentapetalae</taxon>
        <taxon>asterids</taxon>
        <taxon>lamiids</taxon>
        <taxon>Gentianales</taxon>
        <taxon>Apocynaceae</taxon>
        <taxon>Rauvolfioideae</taxon>
        <taxon>Vinceae</taxon>
        <taxon>Catharanthinae</taxon>
        <taxon>Catharanthus</taxon>
    </lineage>
</organism>
<name>CHSY_CATRO</name>
<keyword id="KW-0012">Acyltransferase</keyword>
<keyword id="KW-0284">Flavonoid biosynthesis</keyword>
<keyword id="KW-0808">Transferase</keyword>
<dbReference type="EC" id="2.3.1.74"/>
<dbReference type="EMBL" id="AJ131813">
    <property type="protein sequence ID" value="CAA10511.1"/>
    <property type="molecule type" value="mRNA"/>
</dbReference>
<dbReference type="SMR" id="Q9ZRS4"/>
<dbReference type="UniPathway" id="UPA00154"/>
<dbReference type="GO" id="GO:0016210">
    <property type="term" value="F:naringenin-chalcone synthase activity"/>
    <property type="evidence" value="ECO:0007669"/>
    <property type="project" value="UniProtKB-EC"/>
</dbReference>
<dbReference type="GO" id="GO:0009813">
    <property type="term" value="P:flavonoid biosynthetic process"/>
    <property type="evidence" value="ECO:0007669"/>
    <property type="project" value="UniProtKB-UniPathway"/>
</dbReference>
<dbReference type="GO" id="GO:0030639">
    <property type="term" value="P:polyketide biosynthetic process"/>
    <property type="evidence" value="ECO:0007669"/>
    <property type="project" value="TreeGrafter"/>
</dbReference>
<dbReference type="CDD" id="cd00831">
    <property type="entry name" value="CHS_like"/>
    <property type="match status" value="1"/>
</dbReference>
<dbReference type="FunFam" id="3.40.47.10:FF:000014">
    <property type="entry name" value="Chalcone synthase 1"/>
    <property type="match status" value="1"/>
</dbReference>
<dbReference type="FunFam" id="3.40.47.10:FF:000025">
    <property type="entry name" value="Chalcone synthase 2"/>
    <property type="match status" value="1"/>
</dbReference>
<dbReference type="Gene3D" id="3.40.47.10">
    <property type="match status" value="2"/>
</dbReference>
<dbReference type="InterPro" id="IPR012328">
    <property type="entry name" value="Chalcone/stilbene_synt_C"/>
</dbReference>
<dbReference type="InterPro" id="IPR001099">
    <property type="entry name" value="Chalcone/stilbene_synt_N"/>
</dbReference>
<dbReference type="InterPro" id="IPR018088">
    <property type="entry name" value="Chalcone/stilbene_synthase_AS"/>
</dbReference>
<dbReference type="InterPro" id="IPR011141">
    <property type="entry name" value="Polyketide_synthase_type-III"/>
</dbReference>
<dbReference type="InterPro" id="IPR016039">
    <property type="entry name" value="Thiolase-like"/>
</dbReference>
<dbReference type="PANTHER" id="PTHR11877:SF80">
    <property type="entry name" value="CHALCONE SYNTHASE 1"/>
    <property type="match status" value="1"/>
</dbReference>
<dbReference type="PANTHER" id="PTHR11877">
    <property type="entry name" value="HYDROXYMETHYLGLUTARYL-COA SYNTHASE"/>
    <property type="match status" value="1"/>
</dbReference>
<dbReference type="Pfam" id="PF02797">
    <property type="entry name" value="Chal_sti_synt_C"/>
    <property type="match status" value="1"/>
</dbReference>
<dbReference type="Pfam" id="PF00195">
    <property type="entry name" value="Chal_sti_synt_N"/>
    <property type="match status" value="1"/>
</dbReference>
<dbReference type="PIRSF" id="PIRSF000451">
    <property type="entry name" value="PKS_III"/>
    <property type="match status" value="1"/>
</dbReference>
<dbReference type="SUPFAM" id="SSF53901">
    <property type="entry name" value="Thiolase-like"/>
    <property type="match status" value="2"/>
</dbReference>
<dbReference type="PROSITE" id="PS00441">
    <property type="entry name" value="CHALCONE_SYNTH"/>
    <property type="match status" value="1"/>
</dbReference>
<evidence type="ECO:0000255" key="1">
    <source>
        <dbReference type="PROSITE-ProRule" id="PRU10023"/>
    </source>
</evidence>
<evidence type="ECO:0000305" key="2"/>